<accession>A4TNZ7</accession>
<organism>
    <name type="scientific">Yersinia pestis (strain Pestoides F)</name>
    <dbReference type="NCBI Taxonomy" id="386656"/>
    <lineage>
        <taxon>Bacteria</taxon>
        <taxon>Pseudomonadati</taxon>
        <taxon>Pseudomonadota</taxon>
        <taxon>Gammaproteobacteria</taxon>
        <taxon>Enterobacterales</taxon>
        <taxon>Yersiniaceae</taxon>
        <taxon>Yersinia</taxon>
    </lineage>
</organism>
<dbReference type="EC" id="6.1.1.4" evidence="1"/>
<dbReference type="EMBL" id="CP000668">
    <property type="protein sequence ID" value="ABP41009.1"/>
    <property type="molecule type" value="Genomic_DNA"/>
</dbReference>
<dbReference type="RefSeq" id="WP_002210333.1">
    <property type="nucleotide sequence ID" value="NZ_CP009715.1"/>
</dbReference>
<dbReference type="SMR" id="A4TNZ7"/>
<dbReference type="GeneID" id="57976085"/>
<dbReference type="KEGG" id="ypp:YPDSF_2643"/>
<dbReference type="PATRIC" id="fig|386656.14.peg.4170"/>
<dbReference type="GO" id="GO:0005829">
    <property type="term" value="C:cytosol"/>
    <property type="evidence" value="ECO:0007669"/>
    <property type="project" value="TreeGrafter"/>
</dbReference>
<dbReference type="GO" id="GO:0002161">
    <property type="term" value="F:aminoacyl-tRNA deacylase activity"/>
    <property type="evidence" value="ECO:0007669"/>
    <property type="project" value="InterPro"/>
</dbReference>
<dbReference type="GO" id="GO:0005524">
    <property type="term" value="F:ATP binding"/>
    <property type="evidence" value="ECO:0007669"/>
    <property type="project" value="UniProtKB-UniRule"/>
</dbReference>
<dbReference type="GO" id="GO:0004823">
    <property type="term" value="F:leucine-tRNA ligase activity"/>
    <property type="evidence" value="ECO:0007669"/>
    <property type="project" value="UniProtKB-UniRule"/>
</dbReference>
<dbReference type="GO" id="GO:0006429">
    <property type="term" value="P:leucyl-tRNA aminoacylation"/>
    <property type="evidence" value="ECO:0007669"/>
    <property type="project" value="UniProtKB-UniRule"/>
</dbReference>
<dbReference type="CDD" id="cd07958">
    <property type="entry name" value="Anticodon_Ia_Leu_BEm"/>
    <property type="match status" value="1"/>
</dbReference>
<dbReference type="CDD" id="cd00812">
    <property type="entry name" value="LeuRS_core"/>
    <property type="match status" value="1"/>
</dbReference>
<dbReference type="FunFam" id="1.10.730.10:FF:000002">
    <property type="entry name" value="Leucine--tRNA ligase"/>
    <property type="match status" value="2"/>
</dbReference>
<dbReference type="FunFam" id="2.20.28.290:FF:000001">
    <property type="entry name" value="Leucine--tRNA ligase"/>
    <property type="match status" value="1"/>
</dbReference>
<dbReference type="FunFam" id="3.10.20.590:FF:000001">
    <property type="entry name" value="Leucine--tRNA ligase"/>
    <property type="match status" value="1"/>
</dbReference>
<dbReference type="FunFam" id="3.40.50.620:FF:000003">
    <property type="entry name" value="Leucine--tRNA ligase"/>
    <property type="match status" value="1"/>
</dbReference>
<dbReference type="FunFam" id="3.40.50.620:FF:000124">
    <property type="entry name" value="Leucine--tRNA ligase"/>
    <property type="match status" value="1"/>
</dbReference>
<dbReference type="FunFam" id="3.90.740.10:FF:000012">
    <property type="entry name" value="Leucine--tRNA ligase"/>
    <property type="match status" value="1"/>
</dbReference>
<dbReference type="Gene3D" id="2.20.28.290">
    <property type="match status" value="1"/>
</dbReference>
<dbReference type="Gene3D" id="3.10.20.590">
    <property type="match status" value="1"/>
</dbReference>
<dbReference type="Gene3D" id="3.40.50.620">
    <property type="entry name" value="HUPs"/>
    <property type="match status" value="2"/>
</dbReference>
<dbReference type="Gene3D" id="1.10.730.10">
    <property type="entry name" value="Isoleucyl-tRNA Synthetase, Domain 1"/>
    <property type="match status" value="1"/>
</dbReference>
<dbReference type="Gene3D" id="3.90.740.10">
    <property type="entry name" value="Valyl/Leucyl/Isoleucyl-tRNA synthetase, editing domain"/>
    <property type="match status" value="1"/>
</dbReference>
<dbReference type="HAMAP" id="MF_00049_B">
    <property type="entry name" value="Leu_tRNA_synth_B"/>
    <property type="match status" value="1"/>
</dbReference>
<dbReference type="InterPro" id="IPR001412">
    <property type="entry name" value="aa-tRNA-synth_I_CS"/>
</dbReference>
<dbReference type="InterPro" id="IPR002300">
    <property type="entry name" value="aa-tRNA-synth_Ia"/>
</dbReference>
<dbReference type="InterPro" id="IPR002302">
    <property type="entry name" value="Leu-tRNA-ligase"/>
</dbReference>
<dbReference type="InterPro" id="IPR025709">
    <property type="entry name" value="Leu_tRNA-synth_edit"/>
</dbReference>
<dbReference type="InterPro" id="IPR013155">
    <property type="entry name" value="M/V/L/I-tRNA-synth_anticd-bd"/>
</dbReference>
<dbReference type="InterPro" id="IPR015413">
    <property type="entry name" value="Methionyl/Leucyl_tRNA_Synth"/>
</dbReference>
<dbReference type="InterPro" id="IPR014729">
    <property type="entry name" value="Rossmann-like_a/b/a_fold"/>
</dbReference>
<dbReference type="InterPro" id="IPR009080">
    <property type="entry name" value="tRNAsynth_Ia_anticodon-bd"/>
</dbReference>
<dbReference type="InterPro" id="IPR009008">
    <property type="entry name" value="Val/Leu/Ile-tRNA-synth_edit"/>
</dbReference>
<dbReference type="NCBIfam" id="TIGR00396">
    <property type="entry name" value="leuS_bact"/>
    <property type="match status" value="1"/>
</dbReference>
<dbReference type="PANTHER" id="PTHR43740:SF2">
    <property type="entry name" value="LEUCINE--TRNA LIGASE, MITOCHONDRIAL"/>
    <property type="match status" value="1"/>
</dbReference>
<dbReference type="PANTHER" id="PTHR43740">
    <property type="entry name" value="LEUCYL-TRNA SYNTHETASE"/>
    <property type="match status" value="1"/>
</dbReference>
<dbReference type="Pfam" id="PF08264">
    <property type="entry name" value="Anticodon_1"/>
    <property type="match status" value="1"/>
</dbReference>
<dbReference type="Pfam" id="PF00133">
    <property type="entry name" value="tRNA-synt_1"/>
    <property type="match status" value="2"/>
</dbReference>
<dbReference type="Pfam" id="PF13603">
    <property type="entry name" value="tRNA-synt_1_2"/>
    <property type="match status" value="1"/>
</dbReference>
<dbReference type="Pfam" id="PF09334">
    <property type="entry name" value="tRNA-synt_1g"/>
    <property type="match status" value="1"/>
</dbReference>
<dbReference type="PRINTS" id="PR00985">
    <property type="entry name" value="TRNASYNTHLEU"/>
</dbReference>
<dbReference type="SUPFAM" id="SSF47323">
    <property type="entry name" value="Anticodon-binding domain of a subclass of class I aminoacyl-tRNA synthetases"/>
    <property type="match status" value="1"/>
</dbReference>
<dbReference type="SUPFAM" id="SSF52374">
    <property type="entry name" value="Nucleotidylyl transferase"/>
    <property type="match status" value="1"/>
</dbReference>
<dbReference type="SUPFAM" id="SSF50677">
    <property type="entry name" value="ValRS/IleRS/LeuRS editing domain"/>
    <property type="match status" value="1"/>
</dbReference>
<dbReference type="PROSITE" id="PS00178">
    <property type="entry name" value="AA_TRNA_LIGASE_I"/>
    <property type="match status" value="1"/>
</dbReference>
<sequence length="860" mass="97051">MQEQYRPEDIETQVQLHWQEKQTFKVTEDASKEKYYCLSMLPYPSGRLHMGHVRNYTIGDVISRYQRMLGKNVLQPIGWDAFGLPAEGAAVKNNTAPAPWTYDNIEYMKNQLKLLGFGYDWDREIATCKPDYYRWEQWFFTKLYEKGMVYKKTSAVNWCPHDLTVLANEQVIDGCCWRCDTKVERKEIPQWFIKITDYAEQLLNDLDTLESWPEQVKTMQRNWIGRSEGVDIVFDVVDSEEKLSVYTTRPDTFMGVTYVAVAAGHPLSLQAAATNPALADFVAECRNTKVAEAEMATMEKKGMATGLYAIHPLTGEKLPIWAANFVLMDYGTGAVMAVPGHDARDWEFATKYNLPIKPVILAADGSEPDLSQEAMTEKGTLFNSGEFDGLNHEDGFNAIADKLVALGVGQRKVNYRLRDWGVSRQRYWGAPIPMVTLEDGTVVPTPEDQLPVILPEDVVMDGISSPIKADPEWAKTTVNGIPGLRETDTFDTFMESSWYYARYTCPQYDDGMLDPAAANYWLPVDQYVGGIEHAIMHLMYFRFFHKLLRDAGLVDSDEPAKRLLCQGMVLADAFYYTGNNGERIWVSPVDAIVERDDKGRIVKAVDAEGHELVYAGMSKMSKSKNNGIDPQVMVEKYGADTVRLFMMFASPAEMTLEWQESGVEGANRFLKRVWRLAFDHTAKGAVKPLDIASLTEEQKSLRRDLHKTIAKVTDDVGRRQTFNTAIAAVMELMNKLGRAPQETEQDRALMQEALLAVVRMLYPFTPHVCFSLWQALGGEGDIDTAPWPIADEQAMVEDSKLVVVQVNGKVRGRITVPADATEQQVRERAGQEHLVAKYLDGVTVRKVIYVPGKLLNLVVG</sequence>
<keyword id="KW-0030">Aminoacyl-tRNA synthetase</keyword>
<keyword id="KW-0067">ATP-binding</keyword>
<keyword id="KW-0963">Cytoplasm</keyword>
<keyword id="KW-0436">Ligase</keyword>
<keyword id="KW-0547">Nucleotide-binding</keyword>
<keyword id="KW-0648">Protein biosynthesis</keyword>
<reference key="1">
    <citation type="submission" date="2007-02" db="EMBL/GenBank/DDBJ databases">
        <title>Complete sequence of chromosome of Yersinia pestis Pestoides F.</title>
        <authorList>
            <consortium name="US DOE Joint Genome Institute"/>
            <person name="Copeland A."/>
            <person name="Lucas S."/>
            <person name="Lapidus A."/>
            <person name="Barry K."/>
            <person name="Detter J.C."/>
            <person name="Glavina del Rio T."/>
            <person name="Hammon N."/>
            <person name="Israni S."/>
            <person name="Dalin E."/>
            <person name="Tice H."/>
            <person name="Pitluck S."/>
            <person name="Di Bartolo G."/>
            <person name="Chain P."/>
            <person name="Malfatti S."/>
            <person name="Shin M."/>
            <person name="Vergez L."/>
            <person name="Schmutz J."/>
            <person name="Larimer F."/>
            <person name="Land M."/>
            <person name="Hauser L."/>
            <person name="Worsham P."/>
            <person name="Chu M."/>
            <person name="Bearden S."/>
            <person name="Garcia E."/>
            <person name="Richardson P."/>
        </authorList>
    </citation>
    <scope>NUCLEOTIDE SEQUENCE [LARGE SCALE GENOMIC DNA]</scope>
    <source>
        <strain>Pestoides F</strain>
    </source>
</reference>
<proteinExistence type="inferred from homology"/>
<protein>
    <recommendedName>
        <fullName evidence="1">Leucine--tRNA ligase</fullName>
        <ecNumber evidence="1">6.1.1.4</ecNumber>
    </recommendedName>
    <alternativeName>
        <fullName evidence="1">Leucyl-tRNA synthetase</fullName>
        <shortName evidence="1">LeuRS</shortName>
    </alternativeName>
</protein>
<feature type="chain" id="PRO_1000009470" description="Leucine--tRNA ligase">
    <location>
        <begin position="1"/>
        <end position="860"/>
    </location>
</feature>
<feature type="short sequence motif" description="'HIGH' region">
    <location>
        <begin position="42"/>
        <end position="52"/>
    </location>
</feature>
<feature type="short sequence motif" description="'KMSKS' region">
    <location>
        <begin position="619"/>
        <end position="623"/>
    </location>
</feature>
<feature type="binding site" evidence="1">
    <location>
        <position position="622"/>
    </location>
    <ligand>
        <name>ATP</name>
        <dbReference type="ChEBI" id="CHEBI:30616"/>
    </ligand>
</feature>
<comment type="catalytic activity">
    <reaction evidence="1">
        <text>tRNA(Leu) + L-leucine + ATP = L-leucyl-tRNA(Leu) + AMP + diphosphate</text>
        <dbReference type="Rhea" id="RHEA:11688"/>
        <dbReference type="Rhea" id="RHEA-COMP:9613"/>
        <dbReference type="Rhea" id="RHEA-COMP:9622"/>
        <dbReference type="ChEBI" id="CHEBI:30616"/>
        <dbReference type="ChEBI" id="CHEBI:33019"/>
        <dbReference type="ChEBI" id="CHEBI:57427"/>
        <dbReference type="ChEBI" id="CHEBI:78442"/>
        <dbReference type="ChEBI" id="CHEBI:78494"/>
        <dbReference type="ChEBI" id="CHEBI:456215"/>
        <dbReference type="EC" id="6.1.1.4"/>
    </reaction>
</comment>
<comment type="subcellular location">
    <subcellularLocation>
        <location evidence="1">Cytoplasm</location>
    </subcellularLocation>
</comment>
<comment type="similarity">
    <text evidence="1">Belongs to the class-I aminoacyl-tRNA synthetase family.</text>
</comment>
<name>SYL_YERPP</name>
<gene>
    <name evidence="1" type="primary">leuS</name>
    <name type="ordered locus">YPDSF_2643</name>
</gene>
<evidence type="ECO:0000255" key="1">
    <source>
        <dbReference type="HAMAP-Rule" id="MF_00049"/>
    </source>
</evidence>